<dbReference type="EC" id="5.4.99.25" evidence="1"/>
<dbReference type="EMBL" id="AE009439">
    <property type="protein sequence ID" value="AAM02859.1"/>
    <property type="molecule type" value="Genomic_DNA"/>
</dbReference>
<dbReference type="RefSeq" id="WP_011020014.1">
    <property type="nucleotide sequence ID" value="NC_003551.1"/>
</dbReference>
<dbReference type="SMR" id="Q8TUV7"/>
<dbReference type="FunCoup" id="Q8TUV7">
    <property type="interactions" value="1"/>
</dbReference>
<dbReference type="STRING" id="190192.MK1646"/>
<dbReference type="PaxDb" id="190192-MK1646"/>
<dbReference type="EnsemblBacteria" id="AAM02859">
    <property type="protein sequence ID" value="AAM02859"/>
    <property type="gene ID" value="MK1646"/>
</dbReference>
<dbReference type="GeneID" id="1478241"/>
<dbReference type="KEGG" id="mka:MK1646"/>
<dbReference type="PATRIC" id="fig|190192.8.peg.1809"/>
<dbReference type="HOGENOM" id="CLU_028780_2_0_2"/>
<dbReference type="InParanoid" id="Q8TUV7"/>
<dbReference type="OrthoDB" id="10348at2157"/>
<dbReference type="Proteomes" id="UP000001826">
    <property type="component" value="Chromosome"/>
</dbReference>
<dbReference type="GO" id="GO:0000049">
    <property type="term" value="F:tRNA binding"/>
    <property type="evidence" value="ECO:0007669"/>
    <property type="project" value="InterPro"/>
</dbReference>
<dbReference type="GO" id="GO:0160148">
    <property type="term" value="F:tRNA pseudouridine(55) synthase activity"/>
    <property type="evidence" value="ECO:0007669"/>
    <property type="project" value="UniProtKB-EC"/>
</dbReference>
<dbReference type="GO" id="GO:0031119">
    <property type="term" value="P:tRNA pseudouridine synthesis"/>
    <property type="evidence" value="ECO:0007669"/>
    <property type="project" value="UniProtKB-UniRule"/>
</dbReference>
<dbReference type="FunFam" id="3.30.70.2510:FF:000001">
    <property type="entry name" value="tRNA pseudouridine synthase Pus10"/>
    <property type="match status" value="1"/>
</dbReference>
<dbReference type="Gene3D" id="3.30.70.2510">
    <property type="match status" value="1"/>
</dbReference>
<dbReference type="Gene3D" id="3.30.70.3190">
    <property type="match status" value="1"/>
</dbReference>
<dbReference type="HAMAP" id="MF_01893">
    <property type="entry name" value="Pus10_arch"/>
    <property type="match status" value="1"/>
</dbReference>
<dbReference type="InterPro" id="IPR020103">
    <property type="entry name" value="PsdUridine_synth_cat_dom_sf"/>
</dbReference>
<dbReference type="InterPro" id="IPR005912">
    <property type="entry name" value="Pus10"/>
</dbReference>
<dbReference type="InterPro" id="IPR039894">
    <property type="entry name" value="Pus10-like"/>
</dbReference>
<dbReference type="InterPro" id="IPR048741">
    <property type="entry name" value="Pus10-like_C"/>
</dbReference>
<dbReference type="InterPro" id="IPR055174">
    <property type="entry name" value="Pus10_THUMP_arc"/>
</dbReference>
<dbReference type="NCBIfam" id="TIGR01213">
    <property type="entry name" value="pseudo_Pus10arc"/>
    <property type="match status" value="1"/>
</dbReference>
<dbReference type="PANTHER" id="PTHR21568">
    <property type="entry name" value="TRNA PSEUDOURIDINE SYNTHASE PUS10"/>
    <property type="match status" value="1"/>
</dbReference>
<dbReference type="PANTHER" id="PTHR21568:SF0">
    <property type="entry name" value="TRNA PSEUDOURIDINE SYNTHASE PUS10"/>
    <property type="match status" value="1"/>
</dbReference>
<dbReference type="Pfam" id="PF21238">
    <property type="entry name" value="Pus10_C"/>
    <property type="match status" value="1"/>
</dbReference>
<dbReference type="Pfam" id="PF22023">
    <property type="entry name" value="Pus10_THUMP_arc"/>
    <property type="match status" value="1"/>
</dbReference>
<dbReference type="SUPFAM" id="SSF55120">
    <property type="entry name" value="Pseudouridine synthase"/>
    <property type="match status" value="1"/>
</dbReference>
<accession>Q8TUV7</accession>
<comment type="function">
    <text evidence="1">Responsible for synthesis of pseudouridine from uracil-54 and uracil-55 in the psi GC loop of transfer RNAs.</text>
</comment>
<comment type="catalytic activity">
    <reaction evidence="1">
        <text>uridine(54) in tRNA = pseudouridine(54) in tRNA</text>
        <dbReference type="Rhea" id="RHEA:57876"/>
        <dbReference type="Rhea" id="RHEA-COMP:10193"/>
        <dbReference type="Rhea" id="RHEA-COMP:14141"/>
        <dbReference type="ChEBI" id="CHEBI:65314"/>
        <dbReference type="ChEBI" id="CHEBI:65315"/>
    </reaction>
</comment>
<comment type="catalytic activity">
    <reaction evidence="1">
        <text>uridine(55) in tRNA = pseudouridine(55) in tRNA</text>
        <dbReference type="Rhea" id="RHEA:42532"/>
        <dbReference type="Rhea" id="RHEA-COMP:10101"/>
        <dbReference type="Rhea" id="RHEA-COMP:10102"/>
        <dbReference type="ChEBI" id="CHEBI:65314"/>
        <dbReference type="ChEBI" id="CHEBI:65315"/>
        <dbReference type="EC" id="5.4.99.25"/>
    </reaction>
</comment>
<comment type="similarity">
    <text evidence="1">Belongs to the pseudouridine synthase Pus10 family.</text>
</comment>
<evidence type="ECO:0000255" key="1">
    <source>
        <dbReference type="HAMAP-Rule" id="MF_01893"/>
    </source>
</evidence>
<sequence length="436" mass="50019">MIDRLREALKRFNPCDSCLGRAFGYGLTGLENRERGRAIKLYLGMRAHLEGEEETLELLARSGLEEAAAVLDDPPEPEPCGVCRGVLDKVDEFAEVVACELKDLEFRGFVVGSRWPEEIRKAEKELWETLGVEGEPIKREFNREVGKRVEHLLDVRADPRNPDIEVVFDFRPSLEDPKFEVHVRPIYVRGRYLKLRRGIPQTKWPCPRCRGAGCPNCDFTGKLYTESVEELIGMVLKDAFLAESHKFHAAGREDIDVRMLGNGRPFVMELLYPKRRNVDLKEIEGEINRKVGDDVQVVGLEYGDPEDVGKVKDLSERSRKRYRAWVKFGKPVPEDKLREVLKGLERSVIEQRTPRRVLHRRADKVRRKRVHEAKLIEYDGDRAVIEFLCDPGLYVKELISGDAGRTRPSLAELVEVEAECERLDVIEFLDEGGDRS</sequence>
<name>PUS10_METKA</name>
<feature type="chain" id="PRO_0000407389" description="tRNA pseudouridine synthase Pus10">
    <location>
        <begin position="1"/>
        <end position="436"/>
    </location>
</feature>
<feature type="active site" description="Nucleophile" evidence="1">
    <location>
        <position position="254"/>
    </location>
</feature>
<feature type="binding site" evidence="1">
    <location>
        <position position="322"/>
    </location>
    <ligand>
        <name>substrate</name>
    </ligand>
</feature>
<feature type="binding site" evidence="1">
    <location>
        <position position="394"/>
    </location>
    <ligand>
        <name>substrate</name>
    </ligand>
</feature>
<protein>
    <recommendedName>
        <fullName evidence="1">tRNA pseudouridine synthase Pus10</fullName>
        <ecNumber evidence="1">5.4.99.25</ecNumber>
    </recommendedName>
    <alternativeName>
        <fullName evidence="1">tRNA pseudouridine 54/55 synthase</fullName>
        <shortName evidence="1">Psi54/55 synthase</shortName>
    </alternativeName>
</protein>
<organism>
    <name type="scientific">Methanopyrus kandleri (strain AV19 / DSM 6324 / JCM 9639 / NBRC 100938)</name>
    <dbReference type="NCBI Taxonomy" id="190192"/>
    <lineage>
        <taxon>Archaea</taxon>
        <taxon>Methanobacteriati</taxon>
        <taxon>Methanobacteriota</taxon>
        <taxon>Methanomada group</taxon>
        <taxon>Methanopyri</taxon>
        <taxon>Methanopyrales</taxon>
        <taxon>Methanopyraceae</taxon>
        <taxon>Methanopyrus</taxon>
    </lineage>
</organism>
<gene>
    <name evidence="1" type="primary">pus10</name>
    <name type="ordered locus">MK1646</name>
</gene>
<keyword id="KW-0413">Isomerase</keyword>
<keyword id="KW-1185">Reference proteome</keyword>
<keyword id="KW-0694">RNA-binding</keyword>
<keyword id="KW-0819">tRNA processing</keyword>
<reference key="1">
    <citation type="journal article" date="2002" name="Proc. Natl. Acad. Sci. U.S.A.">
        <title>The complete genome of hyperthermophile Methanopyrus kandleri AV19 and monophyly of archaeal methanogens.</title>
        <authorList>
            <person name="Slesarev A.I."/>
            <person name="Mezhevaya K.V."/>
            <person name="Makarova K.S."/>
            <person name="Polushin N.N."/>
            <person name="Shcherbinina O.V."/>
            <person name="Shakhova V.V."/>
            <person name="Belova G.I."/>
            <person name="Aravind L."/>
            <person name="Natale D.A."/>
            <person name="Rogozin I.B."/>
            <person name="Tatusov R.L."/>
            <person name="Wolf Y.I."/>
            <person name="Stetter K.O."/>
            <person name="Malykh A.G."/>
            <person name="Koonin E.V."/>
            <person name="Kozyavkin S.A."/>
        </authorList>
    </citation>
    <scope>NUCLEOTIDE SEQUENCE [LARGE SCALE GENOMIC DNA]</scope>
    <source>
        <strain>AV19 / DSM 6324 / JCM 9639 / NBRC 100938</strain>
    </source>
</reference>
<proteinExistence type="inferred from homology"/>